<evidence type="ECO:0000250" key="1"/>
<evidence type="ECO:0000250" key="2">
    <source>
        <dbReference type="UniProtKB" id="P00157"/>
    </source>
</evidence>
<evidence type="ECO:0000255" key="3">
    <source>
        <dbReference type="PROSITE-ProRule" id="PRU00967"/>
    </source>
</evidence>
<evidence type="ECO:0000255" key="4">
    <source>
        <dbReference type="PROSITE-ProRule" id="PRU00968"/>
    </source>
</evidence>
<name>CYB_ARCLU</name>
<keyword id="KW-0249">Electron transport</keyword>
<keyword id="KW-0349">Heme</keyword>
<keyword id="KW-0408">Iron</keyword>
<keyword id="KW-0472">Membrane</keyword>
<keyword id="KW-0479">Metal-binding</keyword>
<keyword id="KW-0496">Mitochondrion</keyword>
<keyword id="KW-0999">Mitochondrion inner membrane</keyword>
<keyword id="KW-0679">Respiratory chain</keyword>
<keyword id="KW-0812">Transmembrane</keyword>
<keyword id="KW-1133">Transmembrane helix</keyword>
<keyword id="KW-0813">Transport</keyword>
<keyword id="KW-0830">Ubiquinone</keyword>
<sequence length="381" mass="43148">MTNIRKTHPLIKIINHSFIDLPTPSNISSWWNFGSLLGLCLIIQIMTGLFLSMHYTSDTTTAFSSVTHICRDVNYGWLIRYLHANGASMFFICLFLHVGRGMYYGSYTFMETWNIGVLLLFTIMATAFMGYVLPWGQMSFWGATVITNLLSAIPYIGTTLVEWIWGGFSVDKATLTRFFAFHFILPFIITALVIVHLLFLHETGSNNPTGLNSDADKIPFHPYYTIKDLLGVFILILSLMTLVLFFPDLLGDPDNYTPANPLNTPPHIKPEWYFLFAYAILRSIPNKLGGVLALILSILILALLPFLHTSKQRSLIFRPITQTLYWMLVANLLVLTWIGGQPVEHPFIIIGQLASISYFSIILILMPISGIIEDKLLKWSL</sequence>
<organism>
    <name type="scientific">Archboldomys luzonensis</name>
    <name type="common">Mount Isarog shrew mouse</name>
    <dbReference type="NCBI Taxonomy" id="237995"/>
    <lineage>
        <taxon>Eukaryota</taxon>
        <taxon>Metazoa</taxon>
        <taxon>Chordata</taxon>
        <taxon>Craniata</taxon>
        <taxon>Vertebrata</taxon>
        <taxon>Euteleostomi</taxon>
        <taxon>Mammalia</taxon>
        <taxon>Eutheria</taxon>
        <taxon>Euarchontoglires</taxon>
        <taxon>Glires</taxon>
        <taxon>Rodentia</taxon>
        <taxon>Myomorpha</taxon>
        <taxon>Muroidea</taxon>
        <taxon>Muridae</taxon>
        <taxon>Murinae</taxon>
        <taxon>Archboldomys</taxon>
    </lineage>
</organism>
<gene>
    <name type="primary">MT-CYB</name>
    <name type="synonym">COB</name>
    <name type="synonym">CYTB</name>
    <name type="synonym">MTCYB</name>
</gene>
<geneLocation type="mitochondrion"/>
<dbReference type="EMBL" id="AY324460">
    <property type="protein sequence ID" value="AAP88705.2"/>
    <property type="molecule type" value="Genomic_DNA"/>
</dbReference>
<dbReference type="EMBL" id="AY687857">
    <property type="protein sequence ID" value="AAU21040.1"/>
    <property type="molecule type" value="Genomic_DNA"/>
</dbReference>
<dbReference type="EMBL" id="AY687858">
    <property type="protein sequence ID" value="AAU21041.1"/>
    <property type="molecule type" value="Genomic_DNA"/>
</dbReference>
<dbReference type="SMR" id="Q7YC76"/>
<dbReference type="GO" id="GO:0005743">
    <property type="term" value="C:mitochondrial inner membrane"/>
    <property type="evidence" value="ECO:0007669"/>
    <property type="project" value="UniProtKB-SubCell"/>
</dbReference>
<dbReference type="GO" id="GO:0045275">
    <property type="term" value="C:respiratory chain complex III"/>
    <property type="evidence" value="ECO:0007669"/>
    <property type="project" value="InterPro"/>
</dbReference>
<dbReference type="GO" id="GO:0046872">
    <property type="term" value="F:metal ion binding"/>
    <property type="evidence" value="ECO:0007669"/>
    <property type="project" value="UniProtKB-KW"/>
</dbReference>
<dbReference type="GO" id="GO:0008121">
    <property type="term" value="F:ubiquinol-cytochrome-c reductase activity"/>
    <property type="evidence" value="ECO:0007669"/>
    <property type="project" value="InterPro"/>
</dbReference>
<dbReference type="GO" id="GO:0006122">
    <property type="term" value="P:mitochondrial electron transport, ubiquinol to cytochrome c"/>
    <property type="evidence" value="ECO:0007669"/>
    <property type="project" value="TreeGrafter"/>
</dbReference>
<dbReference type="CDD" id="cd00290">
    <property type="entry name" value="cytochrome_b_C"/>
    <property type="match status" value="1"/>
</dbReference>
<dbReference type="CDD" id="cd00284">
    <property type="entry name" value="Cytochrome_b_N"/>
    <property type="match status" value="1"/>
</dbReference>
<dbReference type="FunFam" id="1.20.810.10:FF:000002">
    <property type="entry name" value="Cytochrome b"/>
    <property type="match status" value="1"/>
</dbReference>
<dbReference type="Gene3D" id="1.20.810.10">
    <property type="entry name" value="Cytochrome Bc1 Complex, Chain C"/>
    <property type="match status" value="1"/>
</dbReference>
<dbReference type="InterPro" id="IPR005798">
    <property type="entry name" value="Cyt_b/b6_C"/>
</dbReference>
<dbReference type="InterPro" id="IPR036150">
    <property type="entry name" value="Cyt_b/b6_C_sf"/>
</dbReference>
<dbReference type="InterPro" id="IPR005797">
    <property type="entry name" value="Cyt_b/b6_N"/>
</dbReference>
<dbReference type="InterPro" id="IPR027387">
    <property type="entry name" value="Cytb/b6-like_sf"/>
</dbReference>
<dbReference type="InterPro" id="IPR030689">
    <property type="entry name" value="Cytochrome_b"/>
</dbReference>
<dbReference type="InterPro" id="IPR048260">
    <property type="entry name" value="Cytochrome_b_C_euk/bac"/>
</dbReference>
<dbReference type="InterPro" id="IPR048259">
    <property type="entry name" value="Cytochrome_b_N_euk/bac"/>
</dbReference>
<dbReference type="InterPro" id="IPR016174">
    <property type="entry name" value="Di-haem_cyt_TM"/>
</dbReference>
<dbReference type="PANTHER" id="PTHR19271">
    <property type="entry name" value="CYTOCHROME B"/>
    <property type="match status" value="1"/>
</dbReference>
<dbReference type="PANTHER" id="PTHR19271:SF16">
    <property type="entry name" value="CYTOCHROME B"/>
    <property type="match status" value="1"/>
</dbReference>
<dbReference type="Pfam" id="PF00032">
    <property type="entry name" value="Cytochrom_B_C"/>
    <property type="match status" value="1"/>
</dbReference>
<dbReference type="Pfam" id="PF00033">
    <property type="entry name" value="Cytochrome_B"/>
    <property type="match status" value="1"/>
</dbReference>
<dbReference type="PIRSF" id="PIRSF038885">
    <property type="entry name" value="COB"/>
    <property type="match status" value="1"/>
</dbReference>
<dbReference type="SUPFAM" id="SSF81648">
    <property type="entry name" value="a domain/subunit of cytochrome bc1 complex (Ubiquinol-cytochrome c reductase)"/>
    <property type="match status" value="1"/>
</dbReference>
<dbReference type="SUPFAM" id="SSF81342">
    <property type="entry name" value="Transmembrane di-heme cytochromes"/>
    <property type="match status" value="1"/>
</dbReference>
<dbReference type="PROSITE" id="PS51003">
    <property type="entry name" value="CYTB_CTER"/>
    <property type="match status" value="1"/>
</dbReference>
<dbReference type="PROSITE" id="PS51002">
    <property type="entry name" value="CYTB_NTER"/>
    <property type="match status" value="1"/>
</dbReference>
<comment type="function">
    <text evidence="2">Component of the ubiquinol-cytochrome c reductase complex (complex III or cytochrome b-c1 complex) that is part of the mitochondrial respiratory chain. The b-c1 complex mediates electron transfer from ubiquinol to cytochrome c. Contributes to the generation of a proton gradient across the mitochondrial membrane that is then used for ATP synthesis.</text>
</comment>
<comment type="cofactor">
    <cofactor evidence="2">
        <name>heme b</name>
        <dbReference type="ChEBI" id="CHEBI:60344"/>
    </cofactor>
    <text evidence="2">Binds 2 heme b groups non-covalently.</text>
</comment>
<comment type="subunit">
    <text evidence="2">The cytochrome bc1 complex contains 11 subunits: 3 respiratory subunits (MT-CYB, CYC1 and UQCRFS1), 2 core proteins (UQCRC1 and UQCRC2) and 6 low-molecular weight proteins (UQCRH/QCR6, UQCRB/QCR7, UQCRQ/QCR8, UQCR10/QCR9, UQCR11/QCR10 and a cleavage product of UQCRFS1). This cytochrome bc1 complex then forms a dimer.</text>
</comment>
<comment type="subcellular location">
    <subcellularLocation>
        <location evidence="2">Mitochondrion inner membrane</location>
        <topology evidence="2">Multi-pass membrane protein</topology>
    </subcellularLocation>
</comment>
<comment type="miscellaneous">
    <text evidence="1">Heme 1 (or BL or b562) is low-potential and absorbs at about 562 nm, and heme 2 (or BH or b566) is high-potential and absorbs at about 566 nm.</text>
</comment>
<comment type="similarity">
    <text evidence="3 4">Belongs to the cytochrome b family.</text>
</comment>
<comment type="caution">
    <text evidence="2">The full-length protein contains only eight transmembrane helices, not nine as predicted by bioinformatics tools.</text>
</comment>
<protein>
    <recommendedName>
        <fullName>Cytochrome b</fullName>
    </recommendedName>
    <alternativeName>
        <fullName>Complex III subunit 3</fullName>
    </alternativeName>
    <alternativeName>
        <fullName>Complex III subunit III</fullName>
    </alternativeName>
    <alternativeName>
        <fullName>Cytochrome b-c1 complex subunit 3</fullName>
    </alternativeName>
    <alternativeName>
        <fullName>Ubiquinol-cytochrome-c reductase complex cytochrome b subunit</fullName>
    </alternativeName>
</protein>
<proteinExistence type="inferred from homology"/>
<reference key="1">
    <citation type="journal article" date="2003" name="Biol. J. Linn. Soc. Lond.">
        <title>Molecular phylogeny of the endemic Philippine rodent Apomys (Muridae) and the dynamics of diversification in an oceanic archipelago.</title>
        <authorList>
            <person name="Steppan S.J."/>
            <person name="Zawadzki C."/>
            <person name="Heaney L.R."/>
        </authorList>
    </citation>
    <scope>NUCLEOTIDE SEQUENCE [GENOMIC DNA]</scope>
</reference>
<reference key="2">
    <citation type="journal article" date="2005" name="J. Mammal.">
        <title>Review of the Philippine genera Chrotomys and Celaenomys (Murinae) and description of a new species.</title>
        <authorList>
            <person name="Rickart E.A."/>
            <person name="Heaney L.R."/>
            <person name="Goodman S.M."/>
            <person name="Jansa S."/>
        </authorList>
    </citation>
    <scope>NUCLEOTIDE SEQUENCE [GENOMIC DNA]</scope>
</reference>
<feature type="chain" id="PRO_0000254989" description="Cytochrome b">
    <location>
        <begin position="1"/>
        <end position="381"/>
    </location>
</feature>
<feature type="transmembrane region" description="Helical" evidence="2">
    <location>
        <begin position="33"/>
        <end position="53"/>
    </location>
</feature>
<feature type="transmembrane region" description="Helical" evidence="2">
    <location>
        <begin position="77"/>
        <end position="98"/>
    </location>
</feature>
<feature type="transmembrane region" description="Helical" evidence="2">
    <location>
        <begin position="113"/>
        <end position="133"/>
    </location>
</feature>
<feature type="transmembrane region" description="Helical" evidence="2">
    <location>
        <begin position="178"/>
        <end position="198"/>
    </location>
</feature>
<feature type="transmembrane region" description="Helical" evidence="2">
    <location>
        <begin position="226"/>
        <end position="246"/>
    </location>
</feature>
<feature type="transmembrane region" description="Helical" evidence="2">
    <location>
        <begin position="288"/>
        <end position="308"/>
    </location>
</feature>
<feature type="transmembrane region" description="Helical" evidence="2">
    <location>
        <begin position="320"/>
        <end position="340"/>
    </location>
</feature>
<feature type="transmembrane region" description="Helical" evidence="2">
    <location>
        <begin position="347"/>
        <end position="367"/>
    </location>
</feature>
<feature type="binding site" description="axial binding residue" evidence="2">
    <location>
        <position position="83"/>
    </location>
    <ligand>
        <name>heme b</name>
        <dbReference type="ChEBI" id="CHEBI:60344"/>
        <label>b562</label>
    </ligand>
    <ligandPart>
        <name>Fe</name>
        <dbReference type="ChEBI" id="CHEBI:18248"/>
    </ligandPart>
</feature>
<feature type="binding site" description="axial binding residue" evidence="2">
    <location>
        <position position="97"/>
    </location>
    <ligand>
        <name>heme b</name>
        <dbReference type="ChEBI" id="CHEBI:60344"/>
        <label>b566</label>
    </ligand>
    <ligandPart>
        <name>Fe</name>
        <dbReference type="ChEBI" id="CHEBI:18248"/>
    </ligandPart>
</feature>
<feature type="binding site" description="axial binding residue" evidence="2">
    <location>
        <position position="182"/>
    </location>
    <ligand>
        <name>heme b</name>
        <dbReference type="ChEBI" id="CHEBI:60344"/>
        <label>b562</label>
    </ligand>
    <ligandPart>
        <name>Fe</name>
        <dbReference type="ChEBI" id="CHEBI:18248"/>
    </ligandPart>
</feature>
<feature type="binding site" description="axial binding residue" evidence="2">
    <location>
        <position position="196"/>
    </location>
    <ligand>
        <name>heme b</name>
        <dbReference type="ChEBI" id="CHEBI:60344"/>
        <label>b566</label>
    </ligand>
    <ligandPart>
        <name>Fe</name>
        <dbReference type="ChEBI" id="CHEBI:18248"/>
    </ligandPart>
</feature>
<feature type="binding site" evidence="2">
    <location>
        <position position="201"/>
    </location>
    <ligand>
        <name>a ubiquinone</name>
        <dbReference type="ChEBI" id="CHEBI:16389"/>
    </ligand>
</feature>
<accession>Q7YC76</accession>